<keyword id="KW-0175">Coiled coil</keyword>
<keyword id="KW-1267">Proteomics identification</keyword>
<keyword id="KW-1185">Reference proteome</keyword>
<accession>P0CW27</accession>
<name>CC166_HUMAN</name>
<protein>
    <recommendedName>
        <fullName>Coiled-coil domain-containing protein 166</fullName>
    </recommendedName>
</protein>
<evidence type="ECO:0000255" key="1"/>
<evidence type="ECO:0000256" key="2">
    <source>
        <dbReference type="SAM" id="MobiDB-lite"/>
    </source>
</evidence>
<reference key="1">
    <citation type="journal article" date="2006" name="Nature">
        <title>DNA sequence and analysis of human chromosome 8.</title>
        <authorList>
            <person name="Nusbaum C."/>
            <person name="Mikkelsen T.S."/>
            <person name="Zody M.C."/>
            <person name="Asakawa S."/>
            <person name="Taudien S."/>
            <person name="Garber M."/>
            <person name="Kodira C.D."/>
            <person name="Schueler M.G."/>
            <person name="Shimizu A."/>
            <person name="Whittaker C.A."/>
            <person name="Chang J.L."/>
            <person name="Cuomo C.A."/>
            <person name="Dewar K."/>
            <person name="FitzGerald M.G."/>
            <person name="Yang X."/>
            <person name="Allen N.R."/>
            <person name="Anderson S."/>
            <person name="Asakawa T."/>
            <person name="Blechschmidt K."/>
            <person name="Bloom T."/>
            <person name="Borowsky M.L."/>
            <person name="Butler J."/>
            <person name="Cook A."/>
            <person name="Corum B."/>
            <person name="DeArellano K."/>
            <person name="DeCaprio D."/>
            <person name="Dooley K.T."/>
            <person name="Dorris L. III"/>
            <person name="Engels R."/>
            <person name="Gloeckner G."/>
            <person name="Hafez N."/>
            <person name="Hagopian D.S."/>
            <person name="Hall J.L."/>
            <person name="Ishikawa S.K."/>
            <person name="Jaffe D.B."/>
            <person name="Kamat A."/>
            <person name="Kudoh J."/>
            <person name="Lehmann R."/>
            <person name="Lokitsang T."/>
            <person name="Macdonald P."/>
            <person name="Major J.E."/>
            <person name="Matthews C.D."/>
            <person name="Mauceli E."/>
            <person name="Menzel U."/>
            <person name="Mihalev A.H."/>
            <person name="Minoshima S."/>
            <person name="Murayama Y."/>
            <person name="Naylor J.W."/>
            <person name="Nicol R."/>
            <person name="Nguyen C."/>
            <person name="O'Leary S.B."/>
            <person name="O'Neill K."/>
            <person name="Parker S.C.J."/>
            <person name="Polley A."/>
            <person name="Raymond C.K."/>
            <person name="Reichwald K."/>
            <person name="Rodriguez J."/>
            <person name="Sasaki T."/>
            <person name="Schilhabel M."/>
            <person name="Siddiqui R."/>
            <person name="Smith C.L."/>
            <person name="Sneddon T.P."/>
            <person name="Talamas J.A."/>
            <person name="Tenzin P."/>
            <person name="Topham K."/>
            <person name="Venkataraman V."/>
            <person name="Wen G."/>
            <person name="Yamazaki S."/>
            <person name="Young S.K."/>
            <person name="Zeng Q."/>
            <person name="Zimmer A.R."/>
            <person name="Rosenthal A."/>
            <person name="Birren B.W."/>
            <person name="Platzer M."/>
            <person name="Shimizu N."/>
            <person name="Lander E.S."/>
        </authorList>
    </citation>
    <scope>NUCLEOTIDE SEQUENCE [LARGE SCALE GENOMIC DNA]</scope>
</reference>
<organism>
    <name type="scientific">Homo sapiens</name>
    <name type="common">Human</name>
    <dbReference type="NCBI Taxonomy" id="9606"/>
    <lineage>
        <taxon>Eukaryota</taxon>
        <taxon>Metazoa</taxon>
        <taxon>Chordata</taxon>
        <taxon>Craniata</taxon>
        <taxon>Vertebrata</taxon>
        <taxon>Euteleostomi</taxon>
        <taxon>Mammalia</taxon>
        <taxon>Eutheria</taxon>
        <taxon>Euarchontoglires</taxon>
        <taxon>Primates</taxon>
        <taxon>Haplorrhini</taxon>
        <taxon>Catarrhini</taxon>
        <taxon>Hominidae</taxon>
        <taxon>Homo</taxon>
    </lineage>
</organism>
<feature type="chain" id="PRO_0000412224" description="Coiled-coil domain-containing protein 166">
    <location>
        <begin position="1"/>
        <end position="439"/>
    </location>
</feature>
<feature type="region of interest" description="Disordered" evidence="2">
    <location>
        <begin position="1"/>
        <end position="28"/>
    </location>
</feature>
<feature type="region of interest" description="Disordered" evidence="2">
    <location>
        <begin position="276"/>
        <end position="439"/>
    </location>
</feature>
<feature type="coiled-coil region" evidence="1">
    <location>
        <begin position="27"/>
        <end position="74"/>
    </location>
</feature>
<feature type="coiled-coil region" evidence="1">
    <location>
        <begin position="121"/>
        <end position="213"/>
    </location>
</feature>
<feature type="compositionally biased region" description="Low complexity" evidence="2">
    <location>
        <begin position="9"/>
        <end position="23"/>
    </location>
</feature>
<feature type="compositionally biased region" description="Polar residues" evidence="2">
    <location>
        <begin position="338"/>
        <end position="365"/>
    </location>
</feature>
<feature type="compositionally biased region" description="Low complexity" evidence="2">
    <location>
        <begin position="376"/>
        <end position="392"/>
    </location>
</feature>
<feature type="compositionally biased region" description="Low complexity" evidence="2">
    <location>
        <begin position="428"/>
        <end position="439"/>
    </location>
</feature>
<proteinExistence type="evidence at protein level"/>
<sequence>MAPKKKRGPSAGSQPGGAAAAGAEQPLSERAQYLQREHALLSEQLDTCEESVDQVLRENAFLDREALRLREENRLYASYVSARAQRCAKAIVRLDEQNRVDLAQIHWQRAELASLYHGREDGVRAQLLEMEARAAQMAQQVQELQPYKVLQLEQLARIRALERELLHMRVEHTQLLHRVKRRFLEDKAAFEREARQRVQSLARRAEREAVRALVAHTQAIKADNGRLRQELLLLLRRTQLLHHTRRQLLEQREQLHREHEDTRDLARVHGWLRRGPGGPPLWERPAFSQPTSRPGSLAAPISPSRAASQTPSVVPSRAAPRASSVVPSREASRVPSLVLSSMDSRVPSLATSKVGSRMPSLTASRAGSRALSLVQSLEGSGISSGSSPRVSSQDTLRSTKSGPKLLSGLSRDRDPALLPPQSEDSVNAEAAAEASPGRA</sequence>
<gene>
    <name type="primary">CCDC166</name>
</gene>
<dbReference type="EMBL" id="AC105219">
    <property type="status" value="NOT_ANNOTATED_CDS"/>
    <property type="molecule type" value="Genomic_DNA"/>
</dbReference>
<dbReference type="CCDS" id="CCDS55280.1"/>
<dbReference type="RefSeq" id="NP_001156386.1">
    <property type="nucleotide sequence ID" value="NM_001162914.1"/>
</dbReference>
<dbReference type="SMR" id="P0CW27"/>
<dbReference type="IntAct" id="P0CW27">
    <property type="interactions" value="1"/>
</dbReference>
<dbReference type="STRING" id="9606.ENSP00000437468"/>
<dbReference type="iPTMnet" id="P0CW27"/>
<dbReference type="PhosphoSitePlus" id="P0CW27"/>
<dbReference type="BioMuta" id="CCDC166"/>
<dbReference type="DMDM" id="347602472"/>
<dbReference type="jPOST" id="P0CW27"/>
<dbReference type="MassIVE" id="P0CW27"/>
<dbReference type="PaxDb" id="9606-ENSP00000437468"/>
<dbReference type="PeptideAtlas" id="P0CW27"/>
<dbReference type="ProteomicsDB" id="52525"/>
<dbReference type="Antibodypedia" id="63763">
    <property type="antibodies" value="4 antibodies from 4 providers"/>
</dbReference>
<dbReference type="DNASU" id="100130274"/>
<dbReference type="Ensembl" id="ENST00000533508.2">
    <property type="protein sequence ID" value="ENSP00000437315.2"/>
    <property type="gene ID" value="ENSG00000278749.1"/>
</dbReference>
<dbReference type="Ensembl" id="ENST00000542437.1">
    <property type="protein sequence ID" value="ENSP00000437468.1"/>
    <property type="gene ID" value="ENSG00000255181.3"/>
</dbReference>
<dbReference type="GeneID" id="100130274"/>
<dbReference type="KEGG" id="hsa:100130274"/>
<dbReference type="MANE-Select" id="ENST00000542437.1">
    <property type="protein sequence ID" value="ENSP00000437468.1"/>
    <property type="RefSeq nucleotide sequence ID" value="NM_001162914.1"/>
    <property type="RefSeq protein sequence ID" value="NP_001156386.1"/>
</dbReference>
<dbReference type="UCSC" id="uc011lkr.2">
    <property type="organism name" value="human"/>
</dbReference>
<dbReference type="AGR" id="HGNC:41910"/>
<dbReference type="CTD" id="100130274"/>
<dbReference type="GeneCards" id="CCDC166"/>
<dbReference type="HGNC" id="HGNC:41910">
    <property type="gene designation" value="CCDC166"/>
</dbReference>
<dbReference type="HPA" id="ENSG00000255181">
    <property type="expression patterns" value="Tissue enriched (testis)"/>
</dbReference>
<dbReference type="neXtProt" id="NX_P0CW27"/>
<dbReference type="OpenTargets" id="ENSG00000255181"/>
<dbReference type="VEuPathDB" id="HostDB:ENSG00000255181"/>
<dbReference type="eggNOG" id="ENOG502RXQ4">
    <property type="taxonomic scope" value="Eukaryota"/>
</dbReference>
<dbReference type="GeneTree" id="ENSGT00940000154427"/>
<dbReference type="HOGENOM" id="CLU_609628_0_0_1"/>
<dbReference type="InParanoid" id="P0CW27"/>
<dbReference type="OMA" id="HHTRRQL"/>
<dbReference type="OrthoDB" id="2129492at2759"/>
<dbReference type="PAN-GO" id="P0CW27">
    <property type="GO annotations" value="0 GO annotations based on evolutionary models"/>
</dbReference>
<dbReference type="PhylomeDB" id="P0CW27"/>
<dbReference type="TreeFam" id="TF343581"/>
<dbReference type="PathwayCommons" id="P0CW27"/>
<dbReference type="BioGRID-ORCS" id="100130274">
    <property type="hits" value="6 hits in 1066 CRISPR screens"/>
</dbReference>
<dbReference type="Pharos" id="P0CW27">
    <property type="development level" value="Tdark"/>
</dbReference>
<dbReference type="PRO" id="PR:P0CW27"/>
<dbReference type="Proteomes" id="UP000005640">
    <property type="component" value="Chromosome 8"/>
</dbReference>
<dbReference type="RNAct" id="P0CW27">
    <property type="molecule type" value="protein"/>
</dbReference>
<dbReference type="Bgee" id="ENSG00000255181">
    <property type="expression patterns" value="Expressed in left testis and 10 other cell types or tissues"/>
</dbReference>
<dbReference type="InterPro" id="IPR032777">
    <property type="entry name" value="DUF4515"/>
</dbReference>
<dbReference type="PANTHER" id="PTHR14845">
    <property type="entry name" value="COILED-COIL DOMAIN-CONTAINING 166"/>
    <property type="match status" value="1"/>
</dbReference>
<dbReference type="PANTHER" id="PTHR14845:SF4">
    <property type="entry name" value="COILED-COIL DOMAIN-CONTAINING PROTEIN 166"/>
    <property type="match status" value="1"/>
</dbReference>
<dbReference type="Pfam" id="PF14988">
    <property type="entry name" value="DUF4515"/>
    <property type="match status" value="1"/>
</dbReference>